<organism>
    <name type="scientific">Bacillus cereus (strain ATCC 14579 / DSM 31 / CCUG 7414 / JCM 2152 / NBRC 15305 / NCIMB 9373 / NCTC 2599 / NRRL B-3711)</name>
    <dbReference type="NCBI Taxonomy" id="226900"/>
    <lineage>
        <taxon>Bacteria</taxon>
        <taxon>Bacillati</taxon>
        <taxon>Bacillota</taxon>
        <taxon>Bacilli</taxon>
        <taxon>Bacillales</taxon>
        <taxon>Bacillaceae</taxon>
        <taxon>Bacillus</taxon>
        <taxon>Bacillus cereus group</taxon>
    </lineage>
</organism>
<protein>
    <recommendedName>
        <fullName evidence="1">Urocanate hydratase</fullName>
        <shortName evidence="1">Urocanase</shortName>
        <ecNumber evidence="1">4.2.1.49</ecNumber>
    </recommendedName>
    <alternativeName>
        <fullName evidence="1">Imidazolonepropionate hydrolase</fullName>
    </alternativeName>
</protein>
<comment type="function">
    <text evidence="1">Catalyzes the conversion of urocanate to 4-imidazolone-5-propionate.</text>
</comment>
<comment type="catalytic activity">
    <reaction evidence="1">
        <text>4-imidazolone-5-propanoate = trans-urocanate + H2O</text>
        <dbReference type="Rhea" id="RHEA:13101"/>
        <dbReference type="ChEBI" id="CHEBI:15377"/>
        <dbReference type="ChEBI" id="CHEBI:17771"/>
        <dbReference type="ChEBI" id="CHEBI:77893"/>
        <dbReference type="EC" id="4.2.1.49"/>
    </reaction>
</comment>
<comment type="cofactor">
    <cofactor evidence="1">
        <name>NAD(+)</name>
        <dbReference type="ChEBI" id="CHEBI:57540"/>
    </cofactor>
    <text evidence="1">Binds 1 NAD(+) per subunit.</text>
</comment>
<comment type="pathway">
    <text evidence="1">Amino-acid degradation; L-histidine degradation into L-glutamate; N-formimidoyl-L-glutamate from L-histidine: step 2/3.</text>
</comment>
<comment type="subcellular location">
    <subcellularLocation>
        <location evidence="1">Cytoplasm</location>
    </subcellularLocation>
</comment>
<comment type="similarity">
    <text evidence="1">Belongs to the urocanase family.</text>
</comment>
<reference key="1">
    <citation type="journal article" date="2003" name="Nature">
        <title>Genome sequence of Bacillus cereus and comparative analysis with Bacillus anthracis.</title>
        <authorList>
            <person name="Ivanova N."/>
            <person name="Sorokin A."/>
            <person name="Anderson I."/>
            <person name="Galleron N."/>
            <person name="Candelon B."/>
            <person name="Kapatral V."/>
            <person name="Bhattacharyya A."/>
            <person name="Reznik G."/>
            <person name="Mikhailova N."/>
            <person name="Lapidus A."/>
            <person name="Chu L."/>
            <person name="Mazur M."/>
            <person name="Goltsman E."/>
            <person name="Larsen N."/>
            <person name="D'Souza M."/>
            <person name="Walunas T."/>
            <person name="Grechkin Y."/>
            <person name="Pusch G."/>
            <person name="Haselkorn R."/>
            <person name="Fonstein M."/>
            <person name="Ehrlich S.D."/>
            <person name="Overbeek R."/>
            <person name="Kyrpides N.C."/>
        </authorList>
    </citation>
    <scope>NUCLEOTIDE SEQUENCE [LARGE SCALE GENOMIC DNA]</scope>
    <source>
        <strain>ATCC 14579 / DSM 31 / CCUG 7414 / JCM 2152 / NBRC 15305 / NCIMB 9373 / NCTC 2599 / NRRL B-3711</strain>
    </source>
</reference>
<sequence length="552" mass="60878">MEKVQQTIRAPRGTELQTKGWVQEAALRMLMNNLDPEVAEKPEELVVYGGIGRAARNWESYQAIVDSLKTLESDETLLVQSGKPVAIFKSHEDAPRVLLANSNLVPKWANWDHFRELEKKGLMMYGQMTAGSWIYIGTQGILQGTYETFGEAARQHFDGSLKGTLTLTAGLGGMGGAQPLAVTMNGGVVIAIDVDKRSIDRRIEKRYCDMYTESLEEALTVANEYKEKREPISIGLLGNAAEILPELVKRNITPDLVTDQTSAHDPLNGYIPVGYTLEEAAKLREEDPERYVQLSKESMTKHVEAMLAMQEKGAITFDYGNNIRQVAFDEGLKNAFDFPGFVPAFIRPLFCEGKGPFRWVALSGDPEDIYKTDEVILREFADNEHLCNWIRMARQQVEFQGLPSRICWLGYGERAKFGRIINEMVANGELSAPIVIGRDHLDCGSVASPNRETEAMKDGSDAVADWPILNALINSVNGASWVSVHHGGGVGMGYSLHAGMVIVADGTEAAAKRIERVLTSDPGMGVVRHVDAGYDLAVETAKEKGVNIPMMK</sequence>
<evidence type="ECO:0000255" key="1">
    <source>
        <dbReference type="HAMAP-Rule" id="MF_00577"/>
    </source>
</evidence>
<gene>
    <name evidence="1" type="primary">hutU</name>
    <name type="ordered locus">BC_3651</name>
</gene>
<dbReference type="EC" id="4.2.1.49" evidence="1"/>
<dbReference type="EMBL" id="AE016877">
    <property type="protein sequence ID" value="AAP10580.1"/>
    <property type="molecule type" value="Genomic_DNA"/>
</dbReference>
<dbReference type="RefSeq" id="NP_833379.1">
    <property type="nucleotide sequence ID" value="NC_004722.1"/>
</dbReference>
<dbReference type="RefSeq" id="WP_000416948.1">
    <property type="nucleotide sequence ID" value="NZ_CP138336.1"/>
</dbReference>
<dbReference type="SMR" id="Q81AC7"/>
<dbReference type="STRING" id="226900.BC_3651"/>
<dbReference type="KEGG" id="bce:BC3651"/>
<dbReference type="PATRIC" id="fig|226900.8.peg.3753"/>
<dbReference type="HOGENOM" id="CLU_018868_0_1_9"/>
<dbReference type="OrthoDB" id="9764874at2"/>
<dbReference type="UniPathway" id="UPA00379">
    <property type="reaction ID" value="UER00550"/>
</dbReference>
<dbReference type="Proteomes" id="UP000001417">
    <property type="component" value="Chromosome"/>
</dbReference>
<dbReference type="GO" id="GO:0005737">
    <property type="term" value="C:cytoplasm"/>
    <property type="evidence" value="ECO:0007669"/>
    <property type="project" value="UniProtKB-SubCell"/>
</dbReference>
<dbReference type="GO" id="GO:0016153">
    <property type="term" value="F:urocanate hydratase activity"/>
    <property type="evidence" value="ECO:0000318"/>
    <property type="project" value="GO_Central"/>
</dbReference>
<dbReference type="GO" id="GO:0006548">
    <property type="term" value="P:L-histidine catabolic process"/>
    <property type="evidence" value="ECO:0000318"/>
    <property type="project" value="GO_Central"/>
</dbReference>
<dbReference type="GO" id="GO:0019556">
    <property type="term" value="P:L-histidine catabolic process to glutamate and formamide"/>
    <property type="evidence" value="ECO:0007669"/>
    <property type="project" value="UniProtKB-UniPathway"/>
</dbReference>
<dbReference type="GO" id="GO:0019557">
    <property type="term" value="P:L-histidine catabolic process to glutamate and formate"/>
    <property type="evidence" value="ECO:0007669"/>
    <property type="project" value="UniProtKB-UniPathway"/>
</dbReference>
<dbReference type="FunFam" id="3.40.50.10730:FF:000001">
    <property type="entry name" value="Urocanate hydratase"/>
    <property type="match status" value="1"/>
</dbReference>
<dbReference type="Gene3D" id="3.40.50.10730">
    <property type="entry name" value="Urocanase like domains"/>
    <property type="match status" value="1"/>
</dbReference>
<dbReference type="Gene3D" id="3.40.1770.10">
    <property type="entry name" value="Urocanase superfamily"/>
    <property type="match status" value="1"/>
</dbReference>
<dbReference type="HAMAP" id="MF_00577">
    <property type="entry name" value="HutU"/>
    <property type="match status" value="1"/>
</dbReference>
<dbReference type="InterPro" id="IPR055351">
    <property type="entry name" value="Urocanase"/>
</dbReference>
<dbReference type="InterPro" id="IPR023637">
    <property type="entry name" value="Urocanase-like"/>
</dbReference>
<dbReference type="InterPro" id="IPR035401">
    <property type="entry name" value="Urocanase_C"/>
</dbReference>
<dbReference type="InterPro" id="IPR038364">
    <property type="entry name" value="Urocanase_central_sf"/>
</dbReference>
<dbReference type="InterPro" id="IPR023636">
    <property type="entry name" value="Urocanase_CS"/>
</dbReference>
<dbReference type="InterPro" id="IPR035400">
    <property type="entry name" value="Urocanase_N"/>
</dbReference>
<dbReference type="InterPro" id="IPR035085">
    <property type="entry name" value="Urocanase_Rossmann-like"/>
</dbReference>
<dbReference type="InterPro" id="IPR036190">
    <property type="entry name" value="Urocanase_sf"/>
</dbReference>
<dbReference type="NCBIfam" id="TIGR01228">
    <property type="entry name" value="hutU"/>
    <property type="match status" value="1"/>
</dbReference>
<dbReference type="NCBIfam" id="NF003820">
    <property type="entry name" value="PRK05414.1"/>
    <property type="match status" value="1"/>
</dbReference>
<dbReference type="PANTHER" id="PTHR12216">
    <property type="entry name" value="UROCANATE HYDRATASE"/>
    <property type="match status" value="1"/>
</dbReference>
<dbReference type="PANTHER" id="PTHR12216:SF4">
    <property type="entry name" value="UROCANATE HYDRATASE"/>
    <property type="match status" value="1"/>
</dbReference>
<dbReference type="Pfam" id="PF01175">
    <property type="entry name" value="Urocanase"/>
    <property type="match status" value="1"/>
</dbReference>
<dbReference type="Pfam" id="PF17392">
    <property type="entry name" value="Urocanase_C"/>
    <property type="match status" value="1"/>
</dbReference>
<dbReference type="Pfam" id="PF17391">
    <property type="entry name" value="Urocanase_N"/>
    <property type="match status" value="1"/>
</dbReference>
<dbReference type="PIRSF" id="PIRSF001423">
    <property type="entry name" value="Urocanate_hydrat"/>
    <property type="match status" value="1"/>
</dbReference>
<dbReference type="SUPFAM" id="SSF111326">
    <property type="entry name" value="Urocanase"/>
    <property type="match status" value="1"/>
</dbReference>
<dbReference type="PROSITE" id="PS01233">
    <property type="entry name" value="UROCANASE"/>
    <property type="match status" value="1"/>
</dbReference>
<feature type="chain" id="PRO_0000207332" description="Urocanate hydratase">
    <location>
        <begin position="1"/>
        <end position="552"/>
    </location>
</feature>
<feature type="active site" evidence="1">
    <location>
        <position position="407"/>
    </location>
</feature>
<feature type="binding site" evidence="1">
    <location>
        <begin position="49"/>
        <end position="50"/>
    </location>
    <ligand>
        <name>NAD(+)</name>
        <dbReference type="ChEBI" id="CHEBI:57540"/>
    </ligand>
</feature>
<feature type="binding site" evidence="1">
    <location>
        <position position="127"/>
    </location>
    <ligand>
        <name>NAD(+)</name>
        <dbReference type="ChEBI" id="CHEBI:57540"/>
    </ligand>
</feature>
<feature type="binding site" evidence="1">
    <location>
        <begin position="173"/>
        <end position="175"/>
    </location>
    <ligand>
        <name>NAD(+)</name>
        <dbReference type="ChEBI" id="CHEBI:57540"/>
    </ligand>
</feature>
<feature type="binding site" evidence="1">
    <location>
        <position position="193"/>
    </location>
    <ligand>
        <name>NAD(+)</name>
        <dbReference type="ChEBI" id="CHEBI:57540"/>
    </ligand>
</feature>
<feature type="binding site" evidence="1">
    <location>
        <begin position="239"/>
        <end position="240"/>
    </location>
    <ligand>
        <name>NAD(+)</name>
        <dbReference type="ChEBI" id="CHEBI:57540"/>
    </ligand>
</feature>
<feature type="binding site" evidence="1">
    <location>
        <begin position="260"/>
        <end position="264"/>
    </location>
    <ligand>
        <name>NAD(+)</name>
        <dbReference type="ChEBI" id="CHEBI:57540"/>
    </ligand>
</feature>
<feature type="binding site" evidence="1">
    <location>
        <begin position="270"/>
        <end position="271"/>
    </location>
    <ligand>
        <name>NAD(+)</name>
        <dbReference type="ChEBI" id="CHEBI:57540"/>
    </ligand>
</feature>
<feature type="binding site" evidence="1">
    <location>
        <position position="319"/>
    </location>
    <ligand>
        <name>NAD(+)</name>
        <dbReference type="ChEBI" id="CHEBI:57540"/>
    </ligand>
</feature>
<feature type="binding site" evidence="1">
    <location>
        <position position="489"/>
    </location>
    <ligand>
        <name>NAD(+)</name>
        <dbReference type="ChEBI" id="CHEBI:57540"/>
    </ligand>
</feature>
<accession>Q81AC7</accession>
<keyword id="KW-0963">Cytoplasm</keyword>
<keyword id="KW-0369">Histidine metabolism</keyword>
<keyword id="KW-0456">Lyase</keyword>
<keyword id="KW-0520">NAD</keyword>
<keyword id="KW-1185">Reference proteome</keyword>
<name>HUTU_BACCR</name>
<proteinExistence type="inferred from homology"/>